<dbReference type="EMBL" id="AE017340">
    <property type="protein sequence ID" value="AAV82755.1"/>
    <property type="molecule type" value="Genomic_DNA"/>
</dbReference>
<dbReference type="RefSeq" id="WP_011235152.1">
    <property type="nucleotide sequence ID" value="NC_006512.1"/>
</dbReference>
<dbReference type="SMR" id="Q5QXZ1"/>
<dbReference type="STRING" id="283942.IL1923"/>
<dbReference type="GeneID" id="41337111"/>
<dbReference type="KEGG" id="ilo:IL1923"/>
<dbReference type="eggNOG" id="COG0088">
    <property type="taxonomic scope" value="Bacteria"/>
</dbReference>
<dbReference type="HOGENOM" id="CLU_041575_5_2_6"/>
<dbReference type="OrthoDB" id="9803201at2"/>
<dbReference type="Proteomes" id="UP000001171">
    <property type="component" value="Chromosome"/>
</dbReference>
<dbReference type="GO" id="GO:1990904">
    <property type="term" value="C:ribonucleoprotein complex"/>
    <property type="evidence" value="ECO:0007669"/>
    <property type="project" value="UniProtKB-KW"/>
</dbReference>
<dbReference type="GO" id="GO:0005840">
    <property type="term" value="C:ribosome"/>
    <property type="evidence" value="ECO:0007669"/>
    <property type="project" value="UniProtKB-KW"/>
</dbReference>
<dbReference type="GO" id="GO:0019843">
    <property type="term" value="F:rRNA binding"/>
    <property type="evidence" value="ECO:0007669"/>
    <property type="project" value="UniProtKB-UniRule"/>
</dbReference>
<dbReference type="GO" id="GO:0003735">
    <property type="term" value="F:structural constituent of ribosome"/>
    <property type="evidence" value="ECO:0007669"/>
    <property type="project" value="InterPro"/>
</dbReference>
<dbReference type="GO" id="GO:0006412">
    <property type="term" value="P:translation"/>
    <property type="evidence" value="ECO:0007669"/>
    <property type="project" value="UniProtKB-UniRule"/>
</dbReference>
<dbReference type="FunFam" id="3.40.1370.10:FF:000001">
    <property type="entry name" value="50S ribosomal protein L4"/>
    <property type="match status" value="1"/>
</dbReference>
<dbReference type="Gene3D" id="3.40.1370.10">
    <property type="match status" value="1"/>
</dbReference>
<dbReference type="HAMAP" id="MF_01328_B">
    <property type="entry name" value="Ribosomal_uL4_B"/>
    <property type="match status" value="1"/>
</dbReference>
<dbReference type="InterPro" id="IPR002136">
    <property type="entry name" value="Ribosomal_uL4"/>
</dbReference>
<dbReference type="InterPro" id="IPR013005">
    <property type="entry name" value="Ribosomal_uL4-like"/>
</dbReference>
<dbReference type="InterPro" id="IPR023574">
    <property type="entry name" value="Ribosomal_uL4_dom_sf"/>
</dbReference>
<dbReference type="NCBIfam" id="TIGR03953">
    <property type="entry name" value="rplD_bact"/>
    <property type="match status" value="1"/>
</dbReference>
<dbReference type="PANTHER" id="PTHR10746">
    <property type="entry name" value="50S RIBOSOMAL PROTEIN L4"/>
    <property type="match status" value="1"/>
</dbReference>
<dbReference type="PANTHER" id="PTHR10746:SF6">
    <property type="entry name" value="LARGE RIBOSOMAL SUBUNIT PROTEIN UL4M"/>
    <property type="match status" value="1"/>
</dbReference>
<dbReference type="Pfam" id="PF00573">
    <property type="entry name" value="Ribosomal_L4"/>
    <property type="match status" value="1"/>
</dbReference>
<dbReference type="SUPFAM" id="SSF52166">
    <property type="entry name" value="Ribosomal protein L4"/>
    <property type="match status" value="1"/>
</dbReference>
<keyword id="KW-1185">Reference proteome</keyword>
<keyword id="KW-0687">Ribonucleoprotein</keyword>
<keyword id="KW-0689">Ribosomal protein</keyword>
<keyword id="KW-0694">RNA-binding</keyword>
<keyword id="KW-0699">rRNA-binding</keyword>
<reference key="1">
    <citation type="journal article" date="2004" name="Proc. Natl. Acad. Sci. U.S.A.">
        <title>Genome sequence of the deep-sea gamma-proteobacterium Idiomarina loihiensis reveals amino acid fermentation as a source of carbon and energy.</title>
        <authorList>
            <person name="Hou S."/>
            <person name="Saw J.H."/>
            <person name="Lee K.S."/>
            <person name="Freitas T.A."/>
            <person name="Belisle C."/>
            <person name="Kawarabayasi Y."/>
            <person name="Donachie S.P."/>
            <person name="Pikina A."/>
            <person name="Galperin M.Y."/>
            <person name="Koonin E.V."/>
            <person name="Makarova K.S."/>
            <person name="Omelchenko M.V."/>
            <person name="Sorokin A."/>
            <person name="Wolf Y.I."/>
            <person name="Li Q.X."/>
            <person name="Keum Y.S."/>
            <person name="Campbell S."/>
            <person name="Denery J."/>
            <person name="Aizawa S."/>
            <person name="Shibata S."/>
            <person name="Malahoff A."/>
            <person name="Alam M."/>
        </authorList>
    </citation>
    <scope>NUCLEOTIDE SEQUENCE [LARGE SCALE GENOMIC DNA]</scope>
    <source>
        <strain>ATCC BAA-735 / DSM 15497 / L2-TR</strain>
    </source>
</reference>
<feature type="chain" id="PRO_0000242383" description="Large ribosomal subunit protein uL4">
    <location>
        <begin position="1"/>
        <end position="201"/>
    </location>
</feature>
<feature type="region of interest" description="Disordered" evidence="2">
    <location>
        <begin position="43"/>
        <end position="69"/>
    </location>
</feature>
<protein>
    <recommendedName>
        <fullName evidence="1">Large ribosomal subunit protein uL4</fullName>
    </recommendedName>
    <alternativeName>
        <fullName evidence="3">50S ribosomal protein L4</fullName>
    </alternativeName>
</protein>
<gene>
    <name evidence="1" type="primary">rplD</name>
    <name type="ordered locus">IL1923</name>
</gene>
<sequence>MELTLKDAKGALEVSEATFGREFNEALVHQVVVAYAAGARQGTKAQKTRSEVAGGGKKPWRQKGTGRARAGTIRSPIWRSGGATFAAKPQNHSQKVNKKMYRGAIKSILSELIRQERLIVVEKFGVDEPKTKQLAAKLKEMDLNDVLIVTKEVDENLFLASRNLHKVDVRDVQGIDPVSLIAFEKVLMTADAVKQLEEVLS</sequence>
<name>RL4_IDILO</name>
<evidence type="ECO:0000255" key="1">
    <source>
        <dbReference type="HAMAP-Rule" id="MF_01328"/>
    </source>
</evidence>
<evidence type="ECO:0000256" key="2">
    <source>
        <dbReference type="SAM" id="MobiDB-lite"/>
    </source>
</evidence>
<evidence type="ECO:0000305" key="3"/>
<proteinExistence type="inferred from homology"/>
<organism>
    <name type="scientific">Idiomarina loihiensis (strain ATCC BAA-735 / DSM 15497 / L2-TR)</name>
    <dbReference type="NCBI Taxonomy" id="283942"/>
    <lineage>
        <taxon>Bacteria</taxon>
        <taxon>Pseudomonadati</taxon>
        <taxon>Pseudomonadota</taxon>
        <taxon>Gammaproteobacteria</taxon>
        <taxon>Alteromonadales</taxon>
        <taxon>Idiomarinaceae</taxon>
        <taxon>Idiomarina</taxon>
    </lineage>
</organism>
<accession>Q5QXZ1</accession>
<comment type="function">
    <text evidence="1">One of the primary rRNA binding proteins, this protein initially binds near the 5'-end of the 23S rRNA. It is important during the early stages of 50S assembly. It makes multiple contacts with different domains of the 23S rRNA in the assembled 50S subunit and ribosome.</text>
</comment>
<comment type="function">
    <text evidence="1">Forms part of the polypeptide exit tunnel.</text>
</comment>
<comment type="subunit">
    <text evidence="1">Part of the 50S ribosomal subunit.</text>
</comment>
<comment type="similarity">
    <text evidence="1">Belongs to the universal ribosomal protein uL4 family.</text>
</comment>